<name>SYR_BACLD</name>
<accession>Q65DS9</accession>
<accession>Q62PA0</accession>
<comment type="catalytic activity">
    <reaction evidence="1">
        <text>tRNA(Arg) + L-arginine + ATP = L-arginyl-tRNA(Arg) + AMP + diphosphate</text>
        <dbReference type="Rhea" id="RHEA:20301"/>
        <dbReference type="Rhea" id="RHEA-COMP:9658"/>
        <dbReference type="Rhea" id="RHEA-COMP:9673"/>
        <dbReference type="ChEBI" id="CHEBI:30616"/>
        <dbReference type="ChEBI" id="CHEBI:32682"/>
        <dbReference type="ChEBI" id="CHEBI:33019"/>
        <dbReference type="ChEBI" id="CHEBI:78442"/>
        <dbReference type="ChEBI" id="CHEBI:78513"/>
        <dbReference type="ChEBI" id="CHEBI:456215"/>
        <dbReference type="EC" id="6.1.1.19"/>
    </reaction>
</comment>
<comment type="subunit">
    <text evidence="1">Monomer.</text>
</comment>
<comment type="subcellular location">
    <subcellularLocation>
        <location evidence="1">Cytoplasm</location>
    </subcellularLocation>
</comment>
<comment type="similarity">
    <text evidence="1">Belongs to the class-I aminoacyl-tRNA synthetase family.</text>
</comment>
<dbReference type="EC" id="6.1.1.19" evidence="1"/>
<dbReference type="EMBL" id="AE017333">
    <property type="protein sequence ID" value="AAU42785.1"/>
    <property type="molecule type" value="Genomic_DNA"/>
</dbReference>
<dbReference type="EMBL" id="CP000002">
    <property type="protein sequence ID" value="AAU25411.1"/>
    <property type="molecule type" value="Genomic_DNA"/>
</dbReference>
<dbReference type="RefSeq" id="WP_003186077.1">
    <property type="nucleotide sequence ID" value="NC_006322.1"/>
</dbReference>
<dbReference type="SMR" id="Q65DS9"/>
<dbReference type="STRING" id="279010.BL03923"/>
<dbReference type="GeneID" id="92859455"/>
<dbReference type="KEGG" id="bld:BLi03971"/>
<dbReference type="KEGG" id="bli:BL03923"/>
<dbReference type="eggNOG" id="COG0018">
    <property type="taxonomic scope" value="Bacteria"/>
</dbReference>
<dbReference type="HOGENOM" id="CLU_006406_0_1_9"/>
<dbReference type="Proteomes" id="UP000000606">
    <property type="component" value="Chromosome"/>
</dbReference>
<dbReference type="GO" id="GO:0005737">
    <property type="term" value="C:cytoplasm"/>
    <property type="evidence" value="ECO:0007669"/>
    <property type="project" value="UniProtKB-SubCell"/>
</dbReference>
<dbReference type="GO" id="GO:0004814">
    <property type="term" value="F:arginine-tRNA ligase activity"/>
    <property type="evidence" value="ECO:0007669"/>
    <property type="project" value="UniProtKB-UniRule"/>
</dbReference>
<dbReference type="GO" id="GO:0005524">
    <property type="term" value="F:ATP binding"/>
    <property type="evidence" value="ECO:0007669"/>
    <property type="project" value="UniProtKB-UniRule"/>
</dbReference>
<dbReference type="GO" id="GO:0006420">
    <property type="term" value="P:arginyl-tRNA aminoacylation"/>
    <property type="evidence" value="ECO:0007669"/>
    <property type="project" value="UniProtKB-UniRule"/>
</dbReference>
<dbReference type="CDD" id="cd07956">
    <property type="entry name" value="Anticodon_Ia_Arg"/>
    <property type="match status" value="1"/>
</dbReference>
<dbReference type="CDD" id="cd00671">
    <property type="entry name" value="ArgRS_core"/>
    <property type="match status" value="1"/>
</dbReference>
<dbReference type="FunFam" id="1.10.730.10:FF:000008">
    <property type="entry name" value="Arginine--tRNA ligase"/>
    <property type="match status" value="1"/>
</dbReference>
<dbReference type="FunFam" id="3.30.1360.70:FF:000003">
    <property type="entry name" value="Arginine--tRNA ligase"/>
    <property type="match status" value="1"/>
</dbReference>
<dbReference type="FunFam" id="3.40.50.620:FF:000062">
    <property type="entry name" value="Arginine--tRNA ligase"/>
    <property type="match status" value="1"/>
</dbReference>
<dbReference type="Gene3D" id="3.30.1360.70">
    <property type="entry name" value="Arginyl tRNA synthetase N-terminal domain"/>
    <property type="match status" value="1"/>
</dbReference>
<dbReference type="Gene3D" id="3.40.50.620">
    <property type="entry name" value="HUPs"/>
    <property type="match status" value="1"/>
</dbReference>
<dbReference type="Gene3D" id="1.10.730.10">
    <property type="entry name" value="Isoleucyl-tRNA Synthetase, Domain 1"/>
    <property type="match status" value="1"/>
</dbReference>
<dbReference type="HAMAP" id="MF_00123">
    <property type="entry name" value="Arg_tRNA_synth"/>
    <property type="match status" value="1"/>
</dbReference>
<dbReference type="InterPro" id="IPR001412">
    <property type="entry name" value="aa-tRNA-synth_I_CS"/>
</dbReference>
<dbReference type="InterPro" id="IPR001278">
    <property type="entry name" value="Arg-tRNA-ligase"/>
</dbReference>
<dbReference type="InterPro" id="IPR005148">
    <property type="entry name" value="Arg-tRNA-synth_N"/>
</dbReference>
<dbReference type="InterPro" id="IPR036695">
    <property type="entry name" value="Arg-tRNA-synth_N_sf"/>
</dbReference>
<dbReference type="InterPro" id="IPR035684">
    <property type="entry name" value="ArgRS_core"/>
</dbReference>
<dbReference type="InterPro" id="IPR008909">
    <property type="entry name" value="DALR_anticod-bd"/>
</dbReference>
<dbReference type="InterPro" id="IPR014729">
    <property type="entry name" value="Rossmann-like_a/b/a_fold"/>
</dbReference>
<dbReference type="InterPro" id="IPR009080">
    <property type="entry name" value="tRNAsynth_Ia_anticodon-bd"/>
</dbReference>
<dbReference type="NCBIfam" id="TIGR00456">
    <property type="entry name" value="argS"/>
    <property type="match status" value="1"/>
</dbReference>
<dbReference type="PANTHER" id="PTHR11956:SF5">
    <property type="entry name" value="ARGININE--TRNA LIGASE, CYTOPLASMIC"/>
    <property type="match status" value="1"/>
</dbReference>
<dbReference type="PANTHER" id="PTHR11956">
    <property type="entry name" value="ARGINYL-TRNA SYNTHETASE"/>
    <property type="match status" value="1"/>
</dbReference>
<dbReference type="Pfam" id="PF03485">
    <property type="entry name" value="Arg_tRNA_synt_N"/>
    <property type="match status" value="1"/>
</dbReference>
<dbReference type="Pfam" id="PF05746">
    <property type="entry name" value="DALR_1"/>
    <property type="match status" value="1"/>
</dbReference>
<dbReference type="Pfam" id="PF00750">
    <property type="entry name" value="tRNA-synt_1d"/>
    <property type="match status" value="1"/>
</dbReference>
<dbReference type="PRINTS" id="PR01038">
    <property type="entry name" value="TRNASYNTHARG"/>
</dbReference>
<dbReference type="SMART" id="SM01016">
    <property type="entry name" value="Arg_tRNA_synt_N"/>
    <property type="match status" value="1"/>
</dbReference>
<dbReference type="SMART" id="SM00836">
    <property type="entry name" value="DALR_1"/>
    <property type="match status" value="1"/>
</dbReference>
<dbReference type="SUPFAM" id="SSF47323">
    <property type="entry name" value="Anticodon-binding domain of a subclass of class I aminoacyl-tRNA synthetases"/>
    <property type="match status" value="1"/>
</dbReference>
<dbReference type="SUPFAM" id="SSF55190">
    <property type="entry name" value="Arginyl-tRNA synthetase (ArgRS), N-terminal 'additional' domain"/>
    <property type="match status" value="1"/>
</dbReference>
<dbReference type="SUPFAM" id="SSF52374">
    <property type="entry name" value="Nucleotidylyl transferase"/>
    <property type="match status" value="1"/>
</dbReference>
<dbReference type="PROSITE" id="PS00178">
    <property type="entry name" value="AA_TRNA_LIGASE_I"/>
    <property type="match status" value="1"/>
</dbReference>
<organism>
    <name type="scientific">Bacillus licheniformis (strain ATCC 14580 / DSM 13 / JCM 2505 / CCUG 7422 / NBRC 12200 / NCIMB 9375 / NCTC 10341 / NRRL NRS-1264 / Gibson 46)</name>
    <dbReference type="NCBI Taxonomy" id="279010"/>
    <lineage>
        <taxon>Bacteria</taxon>
        <taxon>Bacillati</taxon>
        <taxon>Bacillota</taxon>
        <taxon>Bacilli</taxon>
        <taxon>Bacillales</taxon>
        <taxon>Bacillaceae</taxon>
        <taxon>Bacillus</taxon>
    </lineage>
</organism>
<proteinExistence type="inferred from homology"/>
<reference key="1">
    <citation type="journal article" date="2004" name="J. Mol. Microbiol. Biotechnol.">
        <title>The complete genome sequence of Bacillus licheniformis DSM13, an organism with great industrial potential.</title>
        <authorList>
            <person name="Veith B."/>
            <person name="Herzberg C."/>
            <person name="Steckel S."/>
            <person name="Feesche J."/>
            <person name="Maurer K.H."/>
            <person name="Ehrenreich P."/>
            <person name="Baeumer S."/>
            <person name="Henne A."/>
            <person name="Liesegang H."/>
            <person name="Merkl R."/>
            <person name="Ehrenreich A."/>
            <person name="Gottschalk G."/>
        </authorList>
    </citation>
    <scope>NUCLEOTIDE SEQUENCE [LARGE SCALE GENOMIC DNA]</scope>
    <source>
        <strain>ATCC 14580 / DSM 13 / JCM 2505 / CCUG 7422 / NBRC 12200 / NCIMB 9375 / NCTC 10341 / NRRL NRS-1264 / Gibson 46</strain>
    </source>
</reference>
<reference key="2">
    <citation type="journal article" date="2004" name="Genome Biol.">
        <title>Complete genome sequence of the industrial bacterium Bacillus licheniformis and comparisons with closely related Bacillus species.</title>
        <authorList>
            <person name="Rey M.W."/>
            <person name="Ramaiya P."/>
            <person name="Nelson B.A."/>
            <person name="Brody-Karpin S.D."/>
            <person name="Zaretsky E.J."/>
            <person name="Tang M."/>
            <person name="Lopez de Leon A."/>
            <person name="Xiang H."/>
            <person name="Gusti V."/>
            <person name="Clausen I.G."/>
            <person name="Olsen P.B."/>
            <person name="Rasmussen M.D."/>
            <person name="Andersen J.T."/>
            <person name="Joergensen P.L."/>
            <person name="Larsen T.S."/>
            <person name="Sorokin A."/>
            <person name="Bolotin A."/>
            <person name="Lapidus A."/>
            <person name="Galleron N."/>
            <person name="Ehrlich S.D."/>
            <person name="Berka R.M."/>
        </authorList>
    </citation>
    <scope>NUCLEOTIDE SEQUENCE [LARGE SCALE GENOMIC DNA]</scope>
    <source>
        <strain>ATCC 14580 / DSM 13 / JCM 2505 / CCUG 7422 / NBRC 12200 / NCIMB 9375 / NCTC 10341 / NRRL NRS-1264 / Gibson 46</strain>
    </source>
</reference>
<gene>
    <name evidence="1" type="primary">argS</name>
    <name type="ordered locus">BLi03971</name>
    <name type="ordered locus">BL03923</name>
</gene>
<keyword id="KW-0030">Aminoacyl-tRNA synthetase</keyword>
<keyword id="KW-0067">ATP-binding</keyword>
<keyword id="KW-0963">Cytoplasm</keyword>
<keyword id="KW-0436">Ligase</keyword>
<keyword id="KW-0547">Nucleotide-binding</keyword>
<keyword id="KW-0648">Protein biosynthesis</keyword>
<keyword id="KW-1185">Reference proteome</keyword>
<sequence>MNIVEQMKDVLKQEIKEAVMKAGLAEESEIPEVVLEVPKDKSHGDYSTNMAMQLARIAKKAPRNIAEEIVASFDKGKASIDKLDIAGPGFINFYMNNQYLTKLIPAVLEAGEAYGETNIGGGERVQVEFVSANPTGNLHLGHARGAAVGDSLCNVLEKAGYEVSREYYINDAGNQINNLALSVEARYFQALGKDKPMPEDGYHGEDIKEIGQKLADEFGDRFVHEEESERLAFFREYGLKYELGKLREDLENFRVPFDVWYSETSLYQNGKIDQALEALREKGHIYEEDGATWFRSTAFGDDKDRVLIKKDGSYTYLLPDIAYHKDKLDRGFQKLINVWGADHHGYIPRMKAAIEALGYDKETLEVEIIQLVHLYKNGEKMKMSKRTGKAVTMRDLIDEVGLDAVRYFFAMRSADTHMDFDLDLAVSTSNENPVYYAQYAHARICSMLRQGEEKGISFEGNLDLTKIGSEKEYDLLKVIGSFPEAVADAAEKRIPHRITNYIFELASVLHSFYNAEKVLDPADEEKSRARLSLMKATQITLNNALKLIGVSAPEKM</sequence>
<feature type="chain" id="PRO_0000241983" description="Arginine--tRNA ligase">
    <location>
        <begin position="1"/>
        <end position="556"/>
    </location>
</feature>
<feature type="short sequence motif" description="'HIGH' region">
    <location>
        <begin position="132"/>
        <end position="142"/>
    </location>
</feature>
<protein>
    <recommendedName>
        <fullName evidence="1">Arginine--tRNA ligase</fullName>
        <ecNumber evidence="1">6.1.1.19</ecNumber>
    </recommendedName>
    <alternativeName>
        <fullName evidence="1">Arginyl-tRNA synthetase</fullName>
        <shortName evidence="1">ArgRS</shortName>
    </alternativeName>
</protein>
<evidence type="ECO:0000255" key="1">
    <source>
        <dbReference type="HAMAP-Rule" id="MF_00123"/>
    </source>
</evidence>